<comment type="function">
    <text evidence="1">Binds to DNA and alters its conformation. May be involved in regulation of gene expression, nucleoid organization and DNA protection.</text>
</comment>
<comment type="subunit">
    <text evidence="1">Homodimer.</text>
</comment>
<comment type="subcellular location">
    <subcellularLocation>
        <location evidence="1">Cytoplasm</location>
        <location evidence="1">Nucleoid</location>
    </subcellularLocation>
</comment>
<comment type="similarity">
    <text evidence="1">Belongs to the YbaB/EbfC family.</text>
</comment>
<reference key="1">
    <citation type="journal article" date="2010" name="J. Bacteriol.">
        <title>Whole genome sequences of two Xylella fastidiosa strains (M12 and M23) causing almond leaf scorch disease in California.</title>
        <authorList>
            <person name="Chen J."/>
            <person name="Xie G."/>
            <person name="Han S."/>
            <person name="Chertkov O."/>
            <person name="Sims D."/>
            <person name="Civerolo E.L."/>
        </authorList>
    </citation>
    <scope>NUCLEOTIDE SEQUENCE [LARGE SCALE GENOMIC DNA]</scope>
    <source>
        <strain>M23</strain>
    </source>
</reference>
<dbReference type="EMBL" id="CP001011">
    <property type="protein sequence ID" value="ACB92550.1"/>
    <property type="molecule type" value="Genomic_DNA"/>
</dbReference>
<dbReference type="SMR" id="B2I5A7"/>
<dbReference type="KEGG" id="xfn:XfasM23_1122"/>
<dbReference type="HOGENOM" id="CLU_140930_0_0_6"/>
<dbReference type="Proteomes" id="UP000001698">
    <property type="component" value="Chromosome"/>
</dbReference>
<dbReference type="GO" id="GO:0043590">
    <property type="term" value="C:bacterial nucleoid"/>
    <property type="evidence" value="ECO:0007669"/>
    <property type="project" value="UniProtKB-UniRule"/>
</dbReference>
<dbReference type="GO" id="GO:0005829">
    <property type="term" value="C:cytosol"/>
    <property type="evidence" value="ECO:0007669"/>
    <property type="project" value="TreeGrafter"/>
</dbReference>
<dbReference type="GO" id="GO:0003677">
    <property type="term" value="F:DNA binding"/>
    <property type="evidence" value="ECO:0007669"/>
    <property type="project" value="UniProtKB-UniRule"/>
</dbReference>
<dbReference type="FunFam" id="3.30.1310.10:FF:000001">
    <property type="entry name" value="Nucleoid-associated protein YbaB"/>
    <property type="match status" value="1"/>
</dbReference>
<dbReference type="Gene3D" id="3.30.1310.10">
    <property type="entry name" value="Nucleoid-associated protein YbaB-like domain"/>
    <property type="match status" value="1"/>
</dbReference>
<dbReference type="HAMAP" id="MF_00274">
    <property type="entry name" value="DNA_YbaB_EbfC"/>
    <property type="match status" value="1"/>
</dbReference>
<dbReference type="InterPro" id="IPR036894">
    <property type="entry name" value="YbaB-like_sf"/>
</dbReference>
<dbReference type="InterPro" id="IPR004401">
    <property type="entry name" value="YbaB/EbfC"/>
</dbReference>
<dbReference type="NCBIfam" id="TIGR00103">
    <property type="entry name" value="DNA_YbaB_EbfC"/>
    <property type="match status" value="1"/>
</dbReference>
<dbReference type="PANTHER" id="PTHR33449">
    <property type="entry name" value="NUCLEOID-ASSOCIATED PROTEIN YBAB"/>
    <property type="match status" value="1"/>
</dbReference>
<dbReference type="PANTHER" id="PTHR33449:SF1">
    <property type="entry name" value="NUCLEOID-ASSOCIATED PROTEIN YBAB"/>
    <property type="match status" value="1"/>
</dbReference>
<dbReference type="Pfam" id="PF02575">
    <property type="entry name" value="YbaB_DNA_bd"/>
    <property type="match status" value="1"/>
</dbReference>
<dbReference type="PIRSF" id="PIRSF004555">
    <property type="entry name" value="UCP004555"/>
    <property type="match status" value="1"/>
</dbReference>
<dbReference type="SUPFAM" id="SSF82607">
    <property type="entry name" value="YbaB-like"/>
    <property type="match status" value="1"/>
</dbReference>
<protein>
    <recommendedName>
        <fullName evidence="1">Nucleoid-associated protein XfasM23_1122</fullName>
    </recommendedName>
</protein>
<accession>B2I5A7</accession>
<organism>
    <name type="scientific">Xylella fastidiosa (strain M23)</name>
    <dbReference type="NCBI Taxonomy" id="405441"/>
    <lineage>
        <taxon>Bacteria</taxon>
        <taxon>Pseudomonadati</taxon>
        <taxon>Pseudomonadota</taxon>
        <taxon>Gammaproteobacteria</taxon>
        <taxon>Lysobacterales</taxon>
        <taxon>Lysobacteraceae</taxon>
        <taxon>Xylella</taxon>
    </lineage>
</organism>
<name>Y1122_XYLF2</name>
<feature type="chain" id="PRO_1000114664" description="Nucleoid-associated protein XfasM23_1122">
    <location>
        <begin position="1"/>
        <end position="107"/>
    </location>
</feature>
<keyword id="KW-0963">Cytoplasm</keyword>
<keyword id="KW-0238">DNA-binding</keyword>
<evidence type="ECO:0000255" key="1">
    <source>
        <dbReference type="HAMAP-Rule" id="MF_00274"/>
    </source>
</evidence>
<sequence length="107" mass="11643">MMRGNIAQLMQQAQKMQENLQRAQEELAKLEVTGSAGGSMVSVILSGTKECRKVRIDPSILNDQEMIEDLIAAAFNDASNKVDAESKERMGSATLGMSLPPGFKLPF</sequence>
<gene>
    <name type="ordered locus">XfasM23_1122</name>
</gene>
<proteinExistence type="inferred from homology"/>